<sequence>MNNTKKDQYSSQSIKVLEGLSAVRKRPGMYIGSTDQKGLHHMIWEIIDNSVDEMMAGYGTTVKLTLKDNYLVEVEDDGRGIPVDIHEKTNKSTVETVLTILHAGGKFDSDTYSMSGGLHGVGASVVNALSSSFKVWVNRDYKIHYIEFKDGGVPLKPLEIIGTDSKKQGTRIQFVPDFSIMEQFEYDETIIADRIEQLAFLNKGIKFIFNDERTDKKTKQEWLYEGGIKQYVENLNASKEPIIPQIIYGEKKTKVTLPKRNLEVTMLLEVAFQYTNGYYNSTYSFCNNIHTNQGGTHEEGFKNALYKIINRYALEKKFIKETDGKISKEDLSEGLTAIISIKHSEPQYQGQTKDRLGNTEVREFTNSVVSELLERFFLENPEEAAKITAKAVSAMFSRKRSEAALESARKSPFESASLPGKLADCTTKDMEISELYIVEGDSAGGSAKSGRDRFYQAILPLRGKVLNVEKANHEKIFKNEEIRTLITAIGAGVNPEFSLDKIRYNKIIIMTDADVDGAHIRILLLTFFFRHMFPLIEKGHVYIAQPPLYRVSYNKQNKYIYSDAQLEEWKNQNPNVRYELQRYKGLGEMDDVQLWETTMDPEKRTLLKVSINDAANADKTFSLLMGDEVSPRRDFIEKNAKSVKNIDF</sequence>
<reference key="1">
    <citation type="journal article" date="1995" name="Gene">
        <title>Sequence and transcriptional analysis of the genes encoding the class-II topoisomerase of Mycoplasma gallisepticum.</title>
        <authorList>
            <person name="Forsyth M.H."/>
            <person name="Sayed A.S."/>
            <person name="Geary S.J."/>
        </authorList>
    </citation>
    <scope>NUCLEOTIDE SEQUENCE [GENOMIC DNA]</scope>
    <source>
        <strain>S6</strain>
    </source>
</reference>
<reference key="2">
    <citation type="journal article" date="2003" name="Microbiology">
        <title>The complete genome sequence of the avian pathogen Mycoplasma gallisepticum strain R(low).</title>
        <authorList>
            <person name="Papazisi L."/>
            <person name="Gorton T.S."/>
            <person name="Kutish G."/>
            <person name="Markham P.F."/>
            <person name="Browning G.F."/>
            <person name="Nguyen D.K."/>
            <person name="Swartzell S."/>
            <person name="Madan A."/>
            <person name="Mahairas G."/>
            <person name="Geary S.J."/>
        </authorList>
    </citation>
    <scope>NUCLEOTIDE SEQUENCE [LARGE SCALE GENOMIC DNA]</scope>
    <source>
        <strain>R(low / passage 15 / clone 2)</strain>
    </source>
</reference>
<evidence type="ECO:0000255" key="1">
    <source>
        <dbReference type="HAMAP-Rule" id="MF_01898"/>
    </source>
</evidence>
<evidence type="ECO:0000305" key="2"/>
<keyword id="KW-0067">ATP-binding</keyword>
<keyword id="KW-0963">Cytoplasm</keyword>
<keyword id="KW-0238">DNA-binding</keyword>
<keyword id="KW-0413">Isomerase</keyword>
<keyword id="KW-0460">Magnesium</keyword>
<keyword id="KW-0479">Metal-binding</keyword>
<keyword id="KW-0547">Nucleotide-binding</keyword>
<keyword id="KW-1185">Reference proteome</keyword>
<keyword id="KW-0799">Topoisomerase</keyword>
<dbReference type="EC" id="5.6.2.2" evidence="1"/>
<dbReference type="EMBL" id="U18306">
    <property type="protein sequence ID" value="AAA57341.1"/>
    <property type="molecule type" value="Genomic_DNA"/>
</dbReference>
<dbReference type="EMBL" id="AE015450">
    <property type="protein sequence ID" value="AAP57074.1"/>
    <property type="molecule type" value="Genomic_DNA"/>
</dbReference>
<dbReference type="RefSeq" id="WP_011113987.1">
    <property type="nucleotide sequence ID" value="NC_004829.2"/>
</dbReference>
<dbReference type="SMR" id="P47720"/>
<dbReference type="GeneID" id="93510564"/>
<dbReference type="KEGG" id="mga:MGA_0616"/>
<dbReference type="PATRIC" id="fig|233150.7.peg.814"/>
<dbReference type="HOGENOM" id="CLU_006146_4_1_14"/>
<dbReference type="OrthoDB" id="9802808at2"/>
<dbReference type="Proteomes" id="UP000001418">
    <property type="component" value="Chromosome"/>
</dbReference>
<dbReference type="GO" id="GO:0005694">
    <property type="term" value="C:chromosome"/>
    <property type="evidence" value="ECO:0007669"/>
    <property type="project" value="InterPro"/>
</dbReference>
<dbReference type="GO" id="GO:0005737">
    <property type="term" value="C:cytoplasm"/>
    <property type="evidence" value="ECO:0007669"/>
    <property type="project" value="UniProtKB-SubCell"/>
</dbReference>
<dbReference type="GO" id="GO:0005524">
    <property type="term" value="F:ATP binding"/>
    <property type="evidence" value="ECO:0007669"/>
    <property type="project" value="UniProtKB-UniRule"/>
</dbReference>
<dbReference type="GO" id="GO:0003677">
    <property type="term" value="F:DNA binding"/>
    <property type="evidence" value="ECO:0007669"/>
    <property type="project" value="UniProtKB-KW"/>
</dbReference>
<dbReference type="GO" id="GO:0034335">
    <property type="term" value="F:DNA negative supercoiling activity"/>
    <property type="evidence" value="ECO:0007669"/>
    <property type="project" value="UniProtKB-ARBA"/>
</dbReference>
<dbReference type="GO" id="GO:0046872">
    <property type="term" value="F:metal ion binding"/>
    <property type="evidence" value="ECO:0007669"/>
    <property type="project" value="UniProtKB-KW"/>
</dbReference>
<dbReference type="GO" id="GO:0006265">
    <property type="term" value="P:DNA topological change"/>
    <property type="evidence" value="ECO:0007669"/>
    <property type="project" value="UniProtKB-UniRule"/>
</dbReference>
<dbReference type="GO" id="GO:0006261">
    <property type="term" value="P:DNA-templated DNA replication"/>
    <property type="evidence" value="ECO:0007669"/>
    <property type="project" value="UniProtKB-UniRule"/>
</dbReference>
<dbReference type="CDD" id="cd16928">
    <property type="entry name" value="HATPase_GyrB-like"/>
    <property type="match status" value="1"/>
</dbReference>
<dbReference type="CDD" id="cd00822">
    <property type="entry name" value="TopoII_Trans_DNA_gyrase"/>
    <property type="match status" value="1"/>
</dbReference>
<dbReference type="CDD" id="cd03366">
    <property type="entry name" value="TOPRIM_TopoIIA_GyrB"/>
    <property type="match status" value="1"/>
</dbReference>
<dbReference type="FunFam" id="3.30.565.10:FF:000002">
    <property type="entry name" value="DNA gyrase subunit B"/>
    <property type="match status" value="1"/>
</dbReference>
<dbReference type="FunFam" id="3.40.50.670:FF:000002">
    <property type="entry name" value="DNA gyrase subunit B"/>
    <property type="match status" value="1"/>
</dbReference>
<dbReference type="Gene3D" id="3.30.230.10">
    <property type="match status" value="1"/>
</dbReference>
<dbReference type="Gene3D" id="3.40.50.670">
    <property type="match status" value="1"/>
</dbReference>
<dbReference type="Gene3D" id="3.30.565.10">
    <property type="entry name" value="Histidine kinase-like ATPase, C-terminal domain"/>
    <property type="match status" value="1"/>
</dbReference>
<dbReference type="HAMAP" id="MF_01898">
    <property type="entry name" value="GyrB"/>
    <property type="match status" value="1"/>
</dbReference>
<dbReference type="InterPro" id="IPR002288">
    <property type="entry name" value="DNA_gyrase_B_C"/>
</dbReference>
<dbReference type="InterPro" id="IPR011557">
    <property type="entry name" value="GyrB"/>
</dbReference>
<dbReference type="InterPro" id="IPR036890">
    <property type="entry name" value="HATPase_C_sf"/>
</dbReference>
<dbReference type="InterPro" id="IPR020568">
    <property type="entry name" value="Ribosomal_Su5_D2-typ_SF"/>
</dbReference>
<dbReference type="InterPro" id="IPR014721">
    <property type="entry name" value="Ribsml_uS5_D2-typ_fold_subgr"/>
</dbReference>
<dbReference type="InterPro" id="IPR001241">
    <property type="entry name" value="Topo_IIA"/>
</dbReference>
<dbReference type="InterPro" id="IPR013760">
    <property type="entry name" value="Topo_IIA-like_dom_sf"/>
</dbReference>
<dbReference type="InterPro" id="IPR000565">
    <property type="entry name" value="Topo_IIA_B"/>
</dbReference>
<dbReference type="InterPro" id="IPR013759">
    <property type="entry name" value="Topo_IIA_B_C"/>
</dbReference>
<dbReference type="InterPro" id="IPR013506">
    <property type="entry name" value="Topo_IIA_bsu_dom2"/>
</dbReference>
<dbReference type="InterPro" id="IPR018522">
    <property type="entry name" value="TopoIIA_CS"/>
</dbReference>
<dbReference type="InterPro" id="IPR006171">
    <property type="entry name" value="TOPRIM_dom"/>
</dbReference>
<dbReference type="InterPro" id="IPR034160">
    <property type="entry name" value="TOPRIM_GyrB"/>
</dbReference>
<dbReference type="NCBIfam" id="TIGR01059">
    <property type="entry name" value="gyrB"/>
    <property type="match status" value="1"/>
</dbReference>
<dbReference type="NCBIfam" id="NF004189">
    <property type="entry name" value="PRK05644.1"/>
    <property type="match status" value="1"/>
</dbReference>
<dbReference type="PANTHER" id="PTHR45866:SF1">
    <property type="entry name" value="DNA GYRASE SUBUNIT B, MITOCHONDRIAL"/>
    <property type="match status" value="1"/>
</dbReference>
<dbReference type="PANTHER" id="PTHR45866">
    <property type="entry name" value="DNA GYRASE/TOPOISOMERASE SUBUNIT B"/>
    <property type="match status" value="1"/>
</dbReference>
<dbReference type="Pfam" id="PF00204">
    <property type="entry name" value="DNA_gyraseB"/>
    <property type="match status" value="1"/>
</dbReference>
<dbReference type="Pfam" id="PF00986">
    <property type="entry name" value="DNA_gyraseB_C"/>
    <property type="match status" value="1"/>
</dbReference>
<dbReference type="Pfam" id="PF02518">
    <property type="entry name" value="HATPase_c"/>
    <property type="match status" value="1"/>
</dbReference>
<dbReference type="Pfam" id="PF01751">
    <property type="entry name" value="Toprim"/>
    <property type="match status" value="1"/>
</dbReference>
<dbReference type="PRINTS" id="PR01159">
    <property type="entry name" value="DNAGYRASEB"/>
</dbReference>
<dbReference type="PRINTS" id="PR00418">
    <property type="entry name" value="TPI2FAMILY"/>
</dbReference>
<dbReference type="SMART" id="SM00387">
    <property type="entry name" value="HATPase_c"/>
    <property type="match status" value="1"/>
</dbReference>
<dbReference type="SMART" id="SM00433">
    <property type="entry name" value="TOP2c"/>
    <property type="match status" value="1"/>
</dbReference>
<dbReference type="SUPFAM" id="SSF55874">
    <property type="entry name" value="ATPase domain of HSP90 chaperone/DNA topoisomerase II/histidine kinase"/>
    <property type="match status" value="1"/>
</dbReference>
<dbReference type="SUPFAM" id="SSF54211">
    <property type="entry name" value="Ribosomal protein S5 domain 2-like"/>
    <property type="match status" value="1"/>
</dbReference>
<dbReference type="SUPFAM" id="SSF56719">
    <property type="entry name" value="Type II DNA topoisomerase"/>
    <property type="match status" value="1"/>
</dbReference>
<dbReference type="PROSITE" id="PS00177">
    <property type="entry name" value="TOPOISOMERASE_II"/>
    <property type="match status" value="1"/>
</dbReference>
<dbReference type="PROSITE" id="PS50880">
    <property type="entry name" value="TOPRIM"/>
    <property type="match status" value="1"/>
</dbReference>
<gene>
    <name evidence="1" type="primary">gyrB</name>
    <name type="ordered locus">MYCGA7240</name>
    <name type="ORF">MGA_0616</name>
</gene>
<name>GYRB_MYCGA</name>
<organism>
    <name type="scientific">Mycoplasmoides gallisepticum (strain R(low / passage 15 / clone 2))</name>
    <name type="common">Mycoplasma gallisepticum</name>
    <dbReference type="NCBI Taxonomy" id="710127"/>
    <lineage>
        <taxon>Bacteria</taxon>
        <taxon>Bacillati</taxon>
        <taxon>Mycoplasmatota</taxon>
        <taxon>Mycoplasmoidales</taxon>
        <taxon>Mycoplasmoidaceae</taxon>
        <taxon>Mycoplasmoides</taxon>
    </lineage>
</organism>
<feature type="chain" id="PRO_0000145318" description="DNA gyrase subunit B">
    <location>
        <begin position="1"/>
        <end position="648"/>
    </location>
</feature>
<feature type="domain" description="Toprim" evidence="1">
    <location>
        <begin position="433"/>
        <end position="547"/>
    </location>
</feature>
<feature type="binding site" evidence="1">
    <location>
        <position position="439"/>
    </location>
    <ligand>
        <name>Mg(2+)</name>
        <dbReference type="ChEBI" id="CHEBI:18420"/>
        <label>1</label>
        <note>catalytic</note>
    </ligand>
</feature>
<feature type="binding site" evidence="1">
    <location>
        <position position="512"/>
    </location>
    <ligand>
        <name>Mg(2+)</name>
        <dbReference type="ChEBI" id="CHEBI:18420"/>
        <label>1</label>
        <note>catalytic</note>
    </ligand>
</feature>
<feature type="binding site" evidence="1">
    <location>
        <position position="512"/>
    </location>
    <ligand>
        <name>Mg(2+)</name>
        <dbReference type="ChEBI" id="CHEBI:18420"/>
        <label>2</label>
    </ligand>
</feature>
<feature type="binding site" evidence="1">
    <location>
        <position position="514"/>
    </location>
    <ligand>
        <name>Mg(2+)</name>
        <dbReference type="ChEBI" id="CHEBI:18420"/>
        <label>2</label>
    </ligand>
</feature>
<feature type="site" description="Interaction with DNA" evidence="1">
    <location>
        <position position="464"/>
    </location>
</feature>
<feature type="site" description="Interaction with DNA" evidence="1">
    <location>
        <position position="467"/>
    </location>
</feature>
<feature type="sequence conflict" description="In Ref. 1; AAA57341." evidence="2" ref="1">
    <original>P</original>
    <variation>S</variation>
    <location>
        <position position="154"/>
    </location>
</feature>
<feature type="sequence conflict" description="In Ref. 1; AAA57341." evidence="2" ref="1">
    <original>S</original>
    <variation>N</variation>
    <location>
        <position position="165"/>
    </location>
</feature>
<feature type="sequence conflict" description="In Ref. 1; AAA57341." evidence="2" ref="1">
    <original>A</original>
    <variation>S</variation>
    <location>
        <position position="192"/>
    </location>
</feature>
<feature type="sequence conflict" description="In Ref. 1; AAA57341." evidence="2" ref="1">
    <original>FKNALYKIIN</original>
    <variation>LRMLFIRSY</variation>
    <location>
        <begin position="301"/>
        <end position="310"/>
    </location>
</feature>
<feature type="sequence conflict" description="In Ref. 1; AAA57341." evidence="2" ref="1">
    <original>ME</original>
    <variation>G</variation>
    <location>
        <begin position="430"/>
        <end position="431"/>
    </location>
</feature>
<feature type="sequence conflict" description="In Ref. 1; AAA57341." evidence="2" ref="1">
    <original>T</original>
    <variation>I</variation>
    <location>
        <position position="605"/>
    </location>
</feature>
<accession>P47720</accession>
<comment type="function">
    <text evidence="1">A type II topoisomerase that negatively supercoils closed circular double-stranded (ds) DNA in an ATP-dependent manner to modulate DNA topology and maintain chromosomes in an underwound state. Negative supercoiling favors strand separation, and DNA replication, transcription, recombination and repair, all of which involve strand separation. Also able to catalyze the interconversion of other topological isomers of dsDNA rings, including catenanes and knotted rings. Type II topoisomerases break and join 2 DNA strands simultaneously in an ATP-dependent manner.</text>
</comment>
<comment type="catalytic activity">
    <reaction evidence="1">
        <text>ATP-dependent breakage, passage and rejoining of double-stranded DNA.</text>
        <dbReference type="EC" id="5.6.2.2"/>
    </reaction>
</comment>
<comment type="cofactor">
    <cofactor evidence="1">
        <name>Mg(2+)</name>
        <dbReference type="ChEBI" id="CHEBI:18420"/>
    </cofactor>
    <cofactor evidence="1">
        <name>Mn(2+)</name>
        <dbReference type="ChEBI" id="CHEBI:29035"/>
    </cofactor>
    <cofactor evidence="1">
        <name>Ca(2+)</name>
        <dbReference type="ChEBI" id="CHEBI:29108"/>
    </cofactor>
    <text evidence="1">Binds two Mg(2+) per subunit. The magnesium ions form salt bridges with both the protein and the DNA. Can also accept other divalent metal cations, such as Mn(2+) or Ca(2+).</text>
</comment>
<comment type="subunit">
    <text evidence="1">Heterotetramer, composed of two GyrA and two GyrB chains. In the heterotetramer, GyrA contains the active site tyrosine that forms a transient covalent intermediate with DNA, while GyrB binds cofactors and catalyzes ATP hydrolysis.</text>
</comment>
<comment type="subcellular location">
    <subcellularLocation>
        <location evidence="1">Cytoplasm</location>
    </subcellularLocation>
</comment>
<comment type="miscellaneous">
    <text evidence="1">Few gyrases are as efficient as E.coli at forming negative supercoils. Not all organisms have 2 type II topoisomerases; in organisms with a single type II topoisomerase this enzyme also has to decatenate newly replicated chromosomes.</text>
</comment>
<comment type="similarity">
    <text evidence="1">Belongs to the type II topoisomerase GyrB family.</text>
</comment>
<proteinExistence type="inferred from homology"/>
<protein>
    <recommendedName>
        <fullName evidence="1">DNA gyrase subunit B</fullName>
        <ecNumber evidence="1">5.6.2.2</ecNumber>
    </recommendedName>
</protein>